<evidence type="ECO:0000255" key="1">
    <source>
        <dbReference type="HAMAP-Rule" id="MF_01656"/>
    </source>
</evidence>
<gene>
    <name type="ordered locus">Daro_3808</name>
</gene>
<organism>
    <name type="scientific">Dechloromonas aromatica (strain RCB)</name>
    <dbReference type="NCBI Taxonomy" id="159087"/>
    <lineage>
        <taxon>Bacteria</taxon>
        <taxon>Pseudomonadati</taxon>
        <taxon>Pseudomonadota</taxon>
        <taxon>Betaproteobacteria</taxon>
        <taxon>Rhodocyclales</taxon>
        <taxon>Azonexaceae</taxon>
        <taxon>Dechloromonas</taxon>
    </lineage>
</organism>
<name>HOA5_DECAR</name>
<accession>Q479E5</accession>
<feature type="chain" id="PRO_0000387818" description="4-hydroxy-2-oxovalerate aldolase 5">
    <location>
        <begin position="1"/>
        <end position="354"/>
    </location>
</feature>
<feature type="domain" description="Pyruvate carboxyltransferase" evidence="1">
    <location>
        <begin position="11"/>
        <end position="263"/>
    </location>
</feature>
<feature type="active site" description="Proton acceptor" evidence="1">
    <location>
        <position position="23"/>
    </location>
</feature>
<feature type="binding site" evidence="1">
    <location>
        <begin position="19"/>
        <end position="20"/>
    </location>
    <ligand>
        <name>substrate</name>
    </ligand>
</feature>
<feature type="binding site" evidence="1">
    <location>
        <position position="20"/>
    </location>
    <ligand>
        <name>Mn(2+)</name>
        <dbReference type="ChEBI" id="CHEBI:29035"/>
    </ligand>
</feature>
<feature type="binding site" evidence="1">
    <location>
        <position position="173"/>
    </location>
    <ligand>
        <name>substrate</name>
    </ligand>
</feature>
<feature type="binding site" evidence="1">
    <location>
        <position position="202"/>
    </location>
    <ligand>
        <name>Mn(2+)</name>
        <dbReference type="ChEBI" id="CHEBI:29035"/>
    </ligand>
</feature>
<feature type="binding site" evidence="1">
    <location>
        <position position="202"/>
    </location>
    <ligand>
        <name>substrate</name>
    </ligand>
</feature>
<feature type="binding site" evidence="1">
    <location>
        <position position="204"/>
    </location>
    <ligand>
        <name>Mn(2+)</name>
        <dbReference type="ChEBI" id="CHEBI:29035"/>
    </ligand>
</feature>
<feature type="binding site" evidence="1">
    <location>
        <position position="293"/>
    </location>
    <ligand>
        <name>substrate</name>
    </ligand>
</feature>
<feature type="site" description="Transition state stabilizer" evidence="1">
    <location>
        <position position="19"/>
    </location>
</feature>
<keyword id="KW-0058">Aromatic hydrocarbons catabolism</keyword>
<keyword id="KW-0456">Lyase</keyword>
<keyword id="KW-0464">Manganese</keyword>
<keyword id="KW-0479">Metal-binding</keyword>
<dbReference type="EC" id="4.1.3.39" evidence="1"/>
<dbReference type="EMBL" id="CP000089">
    <property type="protein sequence ID" value="AAZ48536.1"/>
    <property type="molecule type" value="Genomic_DNA"/>
</dbReference>
<dbReference type="SMR" id="Q479E5"/>
<dbReference type="STRING" id="159087.Daro_3808"/>
<dbReference type="KEGG" id="dar:Daro_3808"/>
<dbReference type="eggNOG" id="COG0119">
    <property type="taxonomic scope" value="Bacteria"/>
</dbReference>
<dbReference type="HOGENOM" id="CLU_049173_0_0_4"/>
<dbReference type="OrthoDB" id="9803573at2"/>
<dbReference type="GO" id="GO:0003852">
    <property type="term" value="F:2-isopropylmalate synthase activity"/>
    <property type="evidence" value="ECO:0007669"/>
    <property type="project" value="TreeGrafter"/>
</dbReference>
<dbReference type="GO" id="GO:0008701">
    <property type="term" value="F:4-hydroxy-2-oxovalerate aldolase activity"/>
    <property type="evidence" value="ECO:0007669"/>
    <property type="project" value="UniProtKB-UniRule"/>
</dbReference>
<dbReference type="GO" id="GO:0030145">
    <property type="term" value="F:manganese ion binding"/>
    <property type="evidence" value="ECO:0007669"/>
    <property type="project" value="UniProtKB-UniRule"/>
</dbReference>
<dbReference type="GO" id="GO:0009056">
    <property type="term" value="P:catabolic process"/>
    <property type="evidence" value="ECO:0007669"/>
    <property type="project" value="UniProtKB-KW"/>
</dbReference>
<dbReference type="GO" id="GO:0009098">
    <property type="term" value="P:L-leucine biosynthetic process"/>
    <property type="evidence" value="ECO:0007669"/>
    <property type="project" value="TreeGrafter"/>
</dbReference>
<dbReference type="CDD" id="cd07943">
    <property type="entry name" value="DRE_TIM_HOA"/>
    <property type="match status" value="1"/>
</dbReference>
<dbReference type="Gene3D" id="1.10.8.60">
    <property type="match status" value="1"/>
</dbReference>
<dbReference type="Gene3D" id="3.20.20.70">
    <property type="entry name" value="Aldolase class I"/>
    <property type="match status" value="1"/>
</dbReference>
<dbReference type="HAMAP" id="MF_01656">
    <property type="entry name" value="HOA"/>
    <property type="match status" value="1"/>
</dbReference>
<dbReference type="InterPro" id="IPR050073">
    <property type="entry name" value="2-IPM_HCS-like"/>
</dbReference>
<dbReference type="InterPro" id="IPR017629">
    <property type="entry name" value="4OH_2_O-val_aldolase"/>
</dbReference>
<dbReference type="InterPro" id="IPR013785">
    <property type="entry name" value="Aldolase_TIM"/>
</dbReference>
<dbReference type="InterPro" id="IPR012425">
    <property type="entry name" value="DmpG_comm"/>
</dbReference>
<dbReference type="InterPro" id="IPR035685">
    <property type="entry name" value="DRE_TIM_HOA"/>
</dbReference>
<dbReference type="InterPro" id="IPR000891">
    <property type="entry name" value="PYR_CT"/>
</dbReference>
<dbReference type="NCBIfam" id="TIGR03217">
    <property type="entry name" value="4OH_2_O_val_ald"/>
    <property type="match status" value="1"/>
</dbReference>
<dbReference type="NCBIfam" id="NF006049">
    <property type="entry name" value="PRK08195.1"/>
    <property type="match status" value="1"/>
</dbReference>
<dbReference type="PANTHER" id="PTHR10277:SF9">
    <property type="entry name" value="2-ISOPROPYLMALATE SYNTHASE 1, CHLOROPLASTIC-RELATED"/>
    <property type="match status" value="1"/>
</dbReference>
<dbReference type="PANTHER" id="PTHR10277">
    <property type="entry name" value="HOMOCITRATE SYNTHASE-RELATED"/>
    <property type="match status" value="1"/>
</dbReference>
<dbReference type="Pfam" id="PF07836">
    <property type="entry name" value="DmpG_comm"/>
    <property type="match status" value="1"/>
</dbReference>
<dbReference type="Pfam" id="PF00682">
    <property type="entry name" value="HMGL-like"/>
    <property type="match status" value="1"/>
</dbReference>
<dbReference type="SUPFAM" id="SSF51569">
    <property type="entry name" value="Aldolase"/>
    <property type="match status" value="1"/>
</dbReference>
<dbReference type="SUPFAM" id="SSF89000">
    <property type="entry name" value="post-HMGL domain-like"/>
    <property type="match status" value="1"/>
</dbReference>
<dbReference type="PROSITE" id="PS50991">
    <property type="entry name" value="PYR_CT"/>
    <property type="match status" value="1"/>
</dbReference>
<protein>
    <recommendedName>
        <fullName evidence="1">4-hydroxy-2-oxovalerate aldolase 5</fullName>
        <shortName evidence="1">HOA 5</shortName>
        <ecNumber evidence="1">4.1.3.39</ecNumber>
    </recommendedName>
    <alternativeName>
        <fullName evidence="1">4-hydroxy-2-keto-pentanoic acid aldolase 5</fullName>
    </alternativeName>
    <alternativeName>
        <fullName evidence="1">4-hydroxy-2-oxopentanoate aldolase 5</fullName>
    </alternativeName>
</protein>
<proteinExistence type="inferred from homology"/>
<reference key="1">
    <citation type="journal article" date="2009" name="BMC Genomics">
        <title>Metabolic analysis of the soil microbe Dechloromonas aromatica str. RCB: indications of a surprisingly complex life-style and cryptic anaerobic pathways for aromatic degradation.</title>
        <authorList>
            <person name="Salinero K.K."/>
            <person name="Keller K."/>
            <person name="Feil W.S."/>
            <person name="Feil H."/>
            <person name="Trong S."/>
            <person name="Di Bartolo G."/>
            <person name="Lapidus A."/>
        </authorList>
    </citation>
    <scope>NUCLEOTIDE SEQUENCE [LARGE SCALE GENOMIC DNA]</scope>
    <source>
        <strain>RCB</strain>
    </source>
</reference>
<comment type="catalytic activity">
    <reaction evidence="1">
        <text>(S)-4-hydroxy-2-oxopentanoate = acetaldehyde + pyruvate</text>
        <dbReference type="Rhea" id="RHEA:22624"/>
        <dbReference type="ChEBI" id="CHEBI:15343"/>
        <dbReference type="ChEBI" id="CHEBI:15361"/>
        <dbReference type="ChEBI" id="CHEBI:73143"/>
        <dbReference type="EC" id="4.1.3.39"/>
    </reaction>
</comment>
<comment type="similarity">
    <text evidence="1">Belongs to the 4-hydroxy-2-oxovalerate aldolase family.</text>
</comment>
<sequence length="354" mass="37730">MSEVNLKGRKVTVHDMCLRDGMHAKREQMSIEQMVTIATALDEAGVPYIQVTHGAGLGGNSLQHGFAPHSNEAYLAAVCGAVKQTKVSVLLLPGLGTMRELQSAYDCGARSVHVATHCTEADTSPQHIAFARKLGMDSTGFLMMAHLNTPEGLAQQGKLMESYGAQTVYITDSAGYMLPGDVKARVSALRDVLKPETEIGFHGHHNMGMGIANSIAAIEAGASRIDASVGGLGAGAGNTPLEAFVAVCERMGIETGCDLFKLMDMAEDIIFPIMDHIVRVDRSSLTLGFAGVYSTFLLHTNRVSQRFGIPARDILVELGRKKMIGGQEDMIIDTAMTMAKERGLLKDATAGVAP</sequence>